<proteinExistence type="evidence at protein level"/>
<dbReference type="EC" id="3.5.2.1" evidence="2 3"/>
<dbReference type="EMBL" id="CP000509">
    <property type="protein sequence ID" value="ABL81019.1"/>
    <property type="molecule type" value="Genomic_DNA"/>
</dbReference>
<dbReference type="RefSeq" id="WP_011754967.1">
    <property type="nucleotide sequence ID" value="NC_008699.1"/>
</dbReference>
<dbReference type="SMR" id="A1SGT4"/>
<dbReference type="STRING" id="196162.Noca_1505"/>
<dbReference type="KEGG" id="nca:Noca_1505"/>
<dbReference type="eggNOG" id="ENOG502Z8BS">
    <property type="taxonomic scope" value="Bacteria"/>
</dbReference>
<dbReference type="HOGENOM" id="CLU_808206_0_0_11"/>
<dbReference type="OrthoDB" id="569708at2"/>
<dbReference type="SABIO-RK" id="A1SGT4"/>
<dbReference type="UniPathway" id="UPA00582">
    <property type="reaction ID" value="UER00644"/>
</dbReference>
<dbReference type="Proteomes" id="UP000000640">
    <property type="component" value="Chromosome"/>
</dbReference>
<dbReference type="GO" id="GO:0047694">
    <property type="term" value="F:barbiturase activity"/>
    <property type="evidence" value="ECO:0007669"/>
    <property type="project" value="UniProtKB-UniRule"/>
</dbReference>
<dbReference type="GO" id="GO:0046872">
    <property type="term" value="F:metal ion binding"/>
    <property type="evidence" value="ECO:0007669"/>
    <property type="project" value="UniProtKB-UniRule"/>
</dbReference>
<dbReference type="GO" id="GO:0006212">
    <property type="term" value="P:uracil catabolic process"/>
    <property type="evidence" value="ECO:0007669"/>
    <property type="project" value="UniProtKB-UniRule"/>
</dbReference>
<dbReference type="Gene3D" id="3.30.1330.160">
    <property type="entry name" value="Cyanuric acid hydrolase/Barbituras, RU C"/>
    <property type="match status" value="1"/>
</dbReference>
<dbReference type="Gene3D" id="3.30.1330.170">
    <property type="entry name" value="Cyanuric acid hydrolase/Barbiturase, RU A"/>
    <property type="match status" value="1"/>
</dbReference>
<dbReference type="Gene3D" id="3.30.1330.180">
    <property type="entry name" value="Cyanuric acid hydrolase/Barbiturase, RU B"/>
    <property type="match status" value="1"/>
</dbReference>
<dbReference type="HAMAP" id="MF_01989">
    <property type="entry name" value="Cyc_amidohydrol"/>
    <property type="match status" value="1"/>
</dbReference>
<dbReference type="InterPro" id="IPR014086">
    <property type="entry name" value="AtzD/Barbiturase"/>
</dbReference>
<dbReference type="InterPro" id="IPR043008">
    <property type="entry name" value="AtzD/Barbiturase_RUA"/>
</dbReference>
<dbReference type="InterPro" id="IPR043006">
    <property type="entry name" value="AtzD/Barbiturase_RUB"/>
</dbReference>
<dbReference type="InterPro" id="IPR043007">
    <property type="entry name" value="AtzD/Barbiturase_RUC"/>
</dbReference>
<dbReference type="NCBIfam" id="TIGR02714">
    <property type="entry name" value="amido_AtzD_TrzD"/>
    <property type="match status" value="1"/>
</dbReference>
<dbReference type="Pfam" id="PF09663">
    <property type="entry name" value="Amido_AtzD_TrzD"/>
    <property type="match status" value="1"/>
</dbReference>
<feature type="chain" id="PRO_0000439907" description="Barbiturase 1">
    <location>
        <begin position="1"/>
        <end position="371"/>
    </location>
</feature>
<feature type="region of interest" description="RU A" evidence="2">
    <location>
        <begin position="1"/>
        <end position="103"/>
    </location>
</feature>
<feature type="region of interest" description="RU B" evidence="2">
    <location>
        <begin position="115"/>
        <end position="250"/>
    </location>
</feature>
<feature type="region of interest" description="RU C" evidence="2">
    <location>
        <begin position="256"/>
        <end position="371"/>
    </location>
</feature>
<feature type="active site" evidence="2">
    <location>
        <position position="165"/>
    </location>
</feature>
<feature type="active site" description="Nucleophile" evidence="2">
    <location>
        <position position="233"/>
    </location>
</feature>
<feature type="binding site" evidence="1 2">
    <location>
        <position position="53"/>
    </location>
    <ligand>
        <name>substrate</name>
    </ligand>
</feature>
<feature type="binding site" evidence="1 2">
    <location>
        <begin position="82"/>
        <end position="83"/>
    </location>
    <ligand>
        <name>substrate</name>
    </ligand>
</feature>
<feature type="binding site" evidence="1 2">
    <location>
        <position position="197"/>
    </location>
    <ligand>
        <name>substrate</name>
    </ligand>
</feature>
<feature type="binding site" evidence="1 2">
    <location>
        <begin position="233"/>
        <end position="234"/>
    </location>
    <ligand>
        <name>substrate</name>
    </ligand>
</feature>
<feature type="binding site" evidence="1 2">
    <location>
        <position position="304"/>
    </location>
    <ligand>
        <name>Mg(2+)</name>
        <dbReference type="ChEBI" id="CHEBI:18420"/>
    </ligand>
</feature>
<feature type="binding site" evidence="1 2">
    <location>
        <position position="331"/>
    </location>
    <ligand>
        <name>substrate</name>
    </ligand>
</feature>
<feature type="binding site" evidence="1 2">
    <location>
        <begin position="350"/>
        <end position="351"/>
    </location>
    <ligand>
        <name>substrate</name>
    </ligand>
</feature>
<feature type="binding site" evidence="1 2">
    <location>
        <position position="353"/>
    </location>
    <ligand>
        <name>Mg(2+)</name>
        <dbReference type="ChEBI" id="CHEBI:18420"/>
    </ligand>
</feature>
<feature type="binding site" evidence="1 2">
    <location>
        <position position="356"/>
    </location>
    <ligand>
        <name>Mg(2+)</name>
        <dbReference type="ChEBI" id="CHEBI:18420"/>
    </ligand>
</feature>
<feature type="binding site" evidence="1 2">
    <location>
        <position position="357"/>
    </location>
    <ligand>
        <name>Mg(2+)</name>
        <dbReference type="ChEBI" id="CHEBI:18420"/>
    </ligand>
</feature>
<feature type="binding site" evidence="1 2">
    <location>
        <position position="358"/>
    </location>
    <ligand>
        <name>Mg(2+)</name>
        <dbReference type="ChEBI" id="CHEBI:18420"/>
    </ligand>
</feature>
<feature type="binding site" evidence="1 2">
    <location>
        <position position="361"/>
    </location>
    <ligand>
        <name>Mg(2+)</name>
        <dbReference type="ChEBI" id="CHEBI:18420"/>
    </ligand>
</feature>
<feature type="site" description="Important for substrate specificity" evidence="2">
    <location>
        <position position="327"/>
    </location>
</feature>
<keyword id="KW-0378">Hydrolase</keyword>
<keyword id="KW-0460">Magnesium</keyword>
<keyword id="KW-0479">Metal-binding</keyword>
<keyword id="KW-1185">Reference proteome</keyword>
<comment type="function">
    <text evidence="2 3">Responsible for the hydrolysis of barbituric acid (2,4,6-trihydroxy-1,3-pyrimidine), an intermediate in the oxidative catabolism of pyrimidines. Catalyzes the hydrolytic opening of the pyrimidine ring of barbituric acid to yield ureidomalonic acid.</text>
</comment>
<comment type="catalytic activity">
    <reaction evidence="2 3">
        <text>barbiturate + H2O = 3-oxo-3-ureidopropanoate</text>
        <dbReference type="Rhea" id="RHEA:18653"/>
        <dbReference type="ChEBI" id="CHEBI:15377"/>
        <dbReference type="ChEBI" id="CHEBI:58775"/>
        <dbReference type="ChEBI" id="CHEBI:77938"/>
        <dbReference type="EC" id="3.5.2.1"/>
    </reaction>
</comment>
<comment type="activity regulation">
    <text evidence="2">Inhibited by cyanuric acid.</text>
</comment>
<comment type="pathway">
    <text evidence="2">Pyrimidine metabolism; uracil degradation via oxidative pathway; malonate and urea from uracil: step 2/3.</text>
</comment>
<comment type="subunit">
    <text evidence="2">Homotetramer.</text>
</comment>
<comment type="domain">
    <text evidence="2">The monomer structure is formed from three repeating units (RUs) that share the same structure as one another. The monomer and the active site possess nearly threefold rotational symmetry, to the extent that the active site possesses three potential Ser-Lys catalytic dyads, but one of the 3 active site surfaces varies in composition suggesting it is involved in conferring substrate specificity.</text>
</comment>
<comment type="similarity">
    <text evidence="2">Belongs to the cyclic amide hydrolase (CyAH) family.</text>
</comment>
<name>BAH1_NOCSJ</name>
<sequence length="371" mass="39259">MPDAIEVRKVPIHSVADASELAKLIDDGVMQAERVIAIIGKTEGNGGVNDYTRIIADRAFREVLVEKGAPAEQVKQVPIVWSGGTDGVISPHATIFATVPPEDLTGALAPSDEQRLTVGFAMSERLAPEDIGRTAMITKVADAVKVAMERAGISDPADVHYVQTKTPLLTIHTIRDAKSRGKTVWTEHTHESMDLSNGCTALGIAVALGEIEMPSDEDVMHDRSLYSSVASCSSGVELDQAQVVVVGNAPGVGGRYRIGHSVMKDALDQDGIWEAIKDAGLDLPERPRTSDLDGRLVNVFLKCEASQDGLVRGRRNAMLDDSDVHWHRQIKSCVGGVTAAVTGDPAVFVSVSAAHQGPDGGGPVAAIVDLG</sequence>
<protein>
    <recommendedName>
        <fullName evidence="2">Barbiturase 1</fullName>
        <ecNumber evidence="2 3">3.5.2.1</ecNumber>
    </recommendedName>
    <alternativeName>
        <fullName evidence="2">Barbituric acid hydrolase 1</fullName>
        <shortName evidence="2">BAH 1</shortName>
    </alternativeName>
</protein>
<organism>
    <name type="scientific">Nocardioides sp. (strain ATCC BAA-499 / JS614)</name>
    <dbReference type="NCBI Taxonomy" id="196162"/>
    <lineage>
        <taxon>Bacteria</taxon>
        <taxon>Bacillati</taxon>
        <taxon>Actinomycetota</taxon>
        <taxon>Actinomycetes</taxon>
        <taxon>Propionibacteriales</taxon>
        <taxon>Nocardioidaceae</taxon>
        <taxon>Nocardioides</taxon>
    </lineage>
</organism>
<accession>A1SGT4</accession>
<evidence type="ECO:0000250" key="1">
    <source>
        <dbReference type="UniProtKB" id="Q8RSQ2"/>
    </source>
</evidence>
<evidence type="ECO:0000255" key="2">
    <source>
        <dbReference type="HAMAP-Rule" id="MF_01989"/>
    </source>
</evidence>
<evidence type="ECO:0000269" key="3">
    <source>
    </source>
</evidence>
<reference key="1">
    <citation type="submission" date="2006-12" db="EMBL/GenBank/DDBJ databases">
        <title>Complete sequence of chromosome 1 of Nocardioides sp. JS614.</title>
        <authorList>
            <person name="Copeland A."/>
            <person name="Lucas S."/>
            <person name="Lapidus A."/>
            <person name="Barry K."/>
            <person name="Detter J.C."/>
            <person name="Glavina del Rio T."/>
            <person name="Hammon N."/>
            <person name="Israni S."/>
            <person name="Dalin E."/>
            <person name="Tice H."/>
            <person name="Pitluck S."/>
            <person name="Thompson L.S."/>
            <person name="Brettin T."/>
            <person name="Bruce D."/>
            <person name="Han C."/>
            <person name="Tapia R."/>
            <person name="Schmutz J."/>
            <person name="Larimer F."/>
            <person name="Land M."/>
            <person name="Hauser L."/>
            <person name="Kyrpides N."/>
            <person name="Kim E."/>
            <person name="Mattes T."/>
            <person name="Gossett J."/>
            <person name="Richardson P."/>
        </authorList>
    </citation>
    <scope>NUCLEOTIDE SEQUENCE [LARGE SCALE GENOMIC DNA]</scope>
    <source>
        <strain>ATCC BAA-499 / JS614</strain>
    </source>
</reference>
<reference key="2">
    <citation type="journal article" date="2017" name="Appl. Environ. Microbiol.">
        <title>High resolution X-ray structures of two functionally distinct members of the cyclic amide hydrolase (CyAH) family of Toblerone fold enzymes.</title>
        <authorList>
            <person name="Peat T.S."/>
            <person name="Balotra S."/>
            <person name="Wilding M."/>
            <person name="Hartley C.J."/>
            <person name="Newman J."/>
            <person name="Scott C."/>
        </authorList>
    </citation>
    <scope>FUNCTION</scope>
    <scope>CATALYTIC ACTIVITY</scope>
</reference>
<gene>
    <name type="ordered locus">Noca_1505</name>
</gene>